<name>RL17_SYNPW</name>
<sequence length="116" mass="13367">MRHQCRVPQLGRPADQRKAMLRGLTTQLIREGRVTTTKARAKALRDEAERMITLAKEGSLASRRRVLGYVYDKQLVHALFEKAPDRYSDRKGGYTRITRTVRRRGDNAEMAIIELV</sequence>
<gene>
    <name evidence="1" type="primary">rplQ</name>
    <name evidence="1" type="synonym">rpl17</name>
    <name type="ordered locus">SynWH7803_0410</name>
</gene>
<feature type="chain" id="PRO_1000055975" description="Large ribosomal subunit protein bL17">
    <location>
        <begin position="1"/>
        <end position="116"/>
    </location>
</feature>
<protein>
    <recommendedName>
        <fullName evidence="1">Large ribosomal subunit protein bL17</fullName>
    </recommendedName>
    <alternativeName>
        <fullName evidence="2">50S ribosomal protein L17</fullName>
    </alternativeName>
</protein>
<organism>
    <name type="scientific">Synechococcus sp. (strain WH7803)</name>
    <dbReference type="NCBI Taxonomy" id="32051"/>
    <lineage>
        <taxon>Bacteria</taxon>
        <taxon>Bacillati</taxon>
        <taxon>Cyanobacteriota</taxon>
        <taxon>Cyanophyceae</taxon>
        <taxon>Synechococcales</taxon>
        <taxon>Synechococcaceae</taxon>
        <taxon>Synechococcus</taxon>
    </lineage>
</organism>
<proteinExistence type="inferred from homology"/>
<dbReference type="EMBL" id="CT971583">
    <property type="protein sequence ID" value="CAK22836.1"/>
    <property type="molecule type" value="Genomic_DNA"/>
</dbReference>
<dbReference type="SMR" id="A5GIS1"/>
<dbReference type="STRING" id="32051.SynWH7803_0410"/>
<dbReference type="KEGG" id="syx:SynWH7803_0410"/>
<dbReference type="eggNOG" id="COG0203">
    <property type="taxonomic scope" value="Bacteria"/>
</dbReference>
<dbReference type="HOGENOM" id="CLU_074407_2_2_3"/>
<dbReference type="OrthoDB" id="9809073at2"/>
<dbReference type="Proteomes" id="UP000001566">
    <property type="component" value="Chromosome"/>
</dbReference>
<dbReference type="GO" id="GO:0022625">
    <property type="term" value="C:cytosolic large ribosomal subunit"/>
    <property type="evidence" value="ECO:0007669"/>
    <property type="project" value="TreeGrafter"/>
</dbReference>
<dbReference type="GO" id="GO:0003735">
    <property type="term" value="F:structural constituent of ribosome"/>
    <property type="evidence" value="ECO:0007669"/>
    <property type="project" value="InterPro"/>
</dbReference>
<dbReference type="GO" id="GO:0006412">
    <property type="term" value="P:translation"/>
    <property type="evidence" value="ECO:0007669"/>
    <property type="project" value="UniProtKB-UniRule"/>
</dbReference>
<dbReference type="FunFam" id="3.90.1030.10:FF:000001">
    <property type="entry name" value="50S ribosomal protein L17"/>
    <property type="match status" value="1"/>
</dbReference>
<dbReference type="Gene3D" id="3.90.1030.10">
    <property type="entry name" value="Ribosomal protein L17"/>
    <property type="match status" value="1"/>
</dbReference>
<dbReference type="HAMAP" id="MF_01368">
    <property type="entry name" value="Ribosomal_bL17"/>
    <property type="match status" value="1"/>
</dbReference>
<dbReference type="InterPro" id="IPR000456">
    <property type="entry name" value="Ribosomal_bL17"/>
</dbReference>
<dbReference type="InterPro" id="IPR036373">
    <property type="entry name" value="Ribosomal_bL17_sf"/>
</dbReference>
<dbReference type="NCBIfam" id="TIGR00059">
    <property type="entry name" value="L17"/>
    <property type="match status" value="1"/>
</dbReference>
<dbReference type="PANTHER" id="PTHR14413:SF16">
    <property type="entry name" value="LARGE RIBOSOMAL SUBUNIT PROTEIN BL17M"/>
    <property type="match status" value="1"/>
</dbReference>
<dbReference type="PANTHER" id="PTHR14413">
    <property type="entry name" value="RIBOSOMAL PROTEIN L17"/>
    <property type="match status" value="1"/>
</dbReference>
<dbReference type="Pfam" id="PF01196">
    <property type="entry name" value="Ribosomal_L17"/>
    <property type="match status" value="1"/>
</dbReference>
<dbReference type="SUPFAM" id="SSF64263">
    <property type="entry name" value="Prokaryotic ribosomal protein L17"/>
    <property type="match status" value="1"/>
</dbReference>
<comment type="subunit">
    <text evidence="1">Part of the 50S ribosomal subunit. Contacts protein L32.</text>
</comment>
<comment type="similarity">
    <text evidence="1">Belongs to the bacterial ribosomal protein bL17 family.</text>
</comment>
<evidence type="ECO:0000255" key="1">
    <source>
        <dbReference type="HAMAP-Rule" id="MF_01368"/>
    </source>
</evidence>
<evidence type="ECO:0000305" key="2"/>
<accession>A5GIS1</accession>
<keyword id="KW-1185">Reference proteome</keyword>
<keyword id="KW-0687">Ribonucleoprotein</keyword>
<keyword id="KW-0689">Ribosomal protein</keyword>
<reference key="1">
    <citation type="submission" date="2006-05" db="EMBL/GenBank/DDBJ databases">
        <authorList>
            <consortium name="Genoscope"/>
        </authorList>
    </citation>
    <scope>NUCLEOTIDE SEQUENCE [LARGE SCALE GENOMIC DNA]</scope>
    <source>
        <strain>WH7803</strain>
    </source>
</reference>